<sequence length="223" mass="25882">MLFLDKGRIEALRRRLIEWYRVYGDKDLPWRNTADPWAILVAAFLLRKTTARQVVRVYEEFLRRYPNPKALASAREDEVRELIRPLGIEHQRAKHLIELAKHIEARYGGRIPCSKEKLKELPGVGDYIASEVLLAACGSPEPLLDRNMIRILERVLGVKSAKKRPHTDPKMWSTARRIVPKDPDMAKEFNYGMLDLARKICTARKPLCTECPLNDICIYYNND</sequence>
<keyword id="KW-0227">DNA damage</keyword>
<keyword id="KW-0234">DNA repair</keyword>
<keyword id="KW-0326">Glycosidase</keyword>
<keyword id="KW-0378">Hydrolase</keyword>
<keyword id="KW-0408">Iron</keyword>
<keyword id="KW-0411">Iron-sulfur</keyword>
<keyword id="KW-0479">Metal-binding</keyword>
<keyword id="KW-1185">Reference proteome</keyword>
<gene>
    <name evidence="6" type="ordered locus">APE_0875.1</name>
</gene>
<dbReference type="EC" id="3.2.2.29" evidence="2"/>
<dbReference type="EMBL" id="BA000002">
    <property type="protein sequence ID" value="BAA79857.2"/>
    <property type="molecule type" value="Genomic_DNA"/>
</dbReference>
<dbReference type="PIR" id="A72682">
    <property type="entry name" value="A72682"/>
</dbReference>
<dbReference type="RefSeq" id="WP_010866034.1">
    <property type="nucleotide sequence ID" value="NC_000854.2"/>
</dbReference>
<dbReference type="SMR" id="Q9YDP0"/>
<dbReference type="STRING" id="272557.APE_0875.1"/>
<dbReference type="REBASE" id="6398">
    <property type="entry name" value="V.ApeKIP"/>
</dbReference>
<dbReference type="EnsemblBacteria" id="BAA79857">
    <property type="protein sequence ID" value="BAA79857"/>
    <property type="gene ID" value="APE_0875.1"/>
</dbReference>
<dbReference type="GeneID" id="1444969"/>
<dbReference type="KEGG" id="ape:APE_0875.1"/>
<dbReference type="PATRIC" id="fig|272557.25.peg.628"/>
<dbReference type="eggNOG" id="arCOG00462">
    <property type="taxonomic scope" value="Archaea"/>
</dbReference>
<dbReference type="Proteomes" id="UP000002518">
    <property type="component" value="Chromosome"/>
</dbReference>
<dbReference type="GO" id="GO:0051539">
    <property type="term" value="F:4 iron, 4 sulfur cluster binding"/>
    <property type="evidence" value="ECO:0007669"/>
    <property type="project" value="InterPro"/>
</dbReference>
<dbReference type="GO" id="GO:0034039">
    <property type="term" value="F:8-oxo-7,8-dihydroguanine DNA N-glycosylase activity"/>
    <property type="evidence" value="ECO:0007669"/>
    <property type="project" value="TreeGrafter"/>
</dbReference>
<dbReference type="GO" id="GO:0035485">
    <property type="term" value="F:adenine/guanine mispair binding"/>
    <property type="evidence" value="ECO:0007669"/>
    <property type="project" value="TreeGrafter"/>
</dbReference>
<dbReference type="GO" id="GO:0141016">
    <property type="term" value="F:G/T mismatch-specific thymine-DNA glycosylase activity"/>
    <property type="evidence" value="ECO:0007669"/>
    <property type="project" value="UniProtKB-EC"/>
</dbReference>
<dbReference type="GO" id="GO:0046872">
    <property type="term" value="F:metal ion binding"/>
    <property type="evidence" value="ECO:0007669"/>
    <property type="project" value="UniProtKB-KW"/>
</dbReference>
<dbReference type="GO" id="GO:0032357">
    <property type="term" value="F:oxidized purine DNA binding"/>
    <property type="evidence" value="ECO:0007669"/>
    <property type="project" value="TreeGrafter"/>
</dbReference>
<dbReference type="GO" id="GO:0000701">
    <property type="term" value="F:purine-specific mismatch base pair DNA N-glycosylase activity"/>
    <property type="evidence" value="ECO:0007669"/>
    <property type="project" value="TreeGrafter"/>
</dbReference>
<dbReference type="GO" id="GO:0006284">
    <property type="term" value="P:base-excision repair"/>
    <property type="evidence" value="ECO:0007669"/>
    <property type="project" value="InterPro"/>
</dbReference>
<dbReference type="GO" id="GO:0006298">
    <property type="term" value="P:mismatch repair"/>
    <property type="evidence" value="ECO:0007669"/>
    <property type="project" value="TreeGrafter"/>
</dbReference>
<dbReference type="CDD" id="cd00056">
    <property type="entry name" value="ENDO3c"/>
    <property type="match status" value="1"/>
</dbReference>
<dbReference type="FunFam" id="1.10.340.30:FF:000001">
    <property type="entry name" value="Endonuclease III"/>
    <property type="match status" value="1"/>
</dbReference>
<dbReference type="Gene3D" id="1.10.1670.10">
    <property type="entry name" value="Helix-hairpin-Helix base-excision DNA repair enzymes (C-terminal)"/>
    <property type="match status" value="1"/>
</dbReference>
<dbReference type="Gene3D" id="1.10.340.30">
    <property type="entry name" value="Hypothetical protein, domain 2"/>
    <property type="match status" value="1"/>
</dbReference>
<dbReference type="InterPro" id="IPR011257">
    <property type="entry name" value="DNA_glycosylase"/>
</dbReference>
<dbReference type="InterPro" id="IPR003651">
    <property type="entry name" value="Endonuclease3_FeS-loop_motif"/>
</dbReference>
<dbReference type="InterPro" id="IPR004035">
    <property type="entry name" value="Endouclease-III_FeS-bd_BS"/>
</dbReference>
<dbReference type="InterPro" id="IPR003265">
    <property type="entry name" value="HhH-GPD_domain"/>
</dbReference>
<dbReference type="InterPro" id="IPR023170">
    <property type="entry name" value="HhH_base_excis_C"/>
</dbReference>
<dbReference type="InterPro" id="IPR044298">
    <property type="entry name" value="MIG/MutY"/>
</dbReference>
<dbReference type="PANTHER" id="PTHR42944">
    <property type="entry name" value="ADENINE DNA GLYCOSYLASE"/>
    <property type="match status" value="1"/>
</dbReference>
<dbReference type="PANTHER" id="PTHR42944:SF1">
    <property type="entry name" value="ADENINE DNA GLYCOSYLASE"/>
    <property type="match status" value="1"/>
</dbReference>
<dbReference type="Pfam" id="PF10576">
    <property type="entry name" value="EndIII_4Fe-2S"/>
    <property type="match status" value="1"/>
</dbReference>
<dbReference type="Pfam" id="PF00730">
    <property type="entry name" value="HhH-GPD"/>
    <property type="match status" value="1"/>
</dbReference>
<dbReference type="PIRSF" id="PIRSF001435">
    <property type="entry name" value="Nth"/>
    <property type="match status" value="1"/>
</dbReference>
<dbReference type="SMART" id="SM00478">
    <property type="entry name" value="ENDO3c"/>
    <property type="match status" value="1"/>
</dbReference>
<dbReference type="SMART" id="SM00525">
    <property type="entry name" value="FES"/>
    <property type="match status" value="1"/>
</dbReference>
<dbReference type="SUPFAM" id="SSF48150">
    <property type="entry name" value="DNA-glycosylase"/>
    <property type="match status" value="1"/>
</dbReference>
<dbReference type="PROSITE" id="PS00764">
    <property type="entry name" value="ENDONUCLEASE_III_1"/>
    <property type="match status" value="1"/>
</dbReference>
<proteinExistence type="evidence at protein level"/>
<name>MIG_AERPE</name>
<organism>
    <name type="scientific">Aeropyrum pernix (strain ATCC 700893 / DSM 11879 / JCM 9820 / NBRC 100138 / K1)</name>
    <dbReference type="NCBI Taxonomy" id="272557"/>
    <lineage>
        <taxon>Archaea</taxon>
        <taxon>Thermoproteota</taxon>
        <taxon>Thermoprotei</taxon>
        <taxon>Desulfurococcales</taxon>
        <taxon>Desulfurococcaceae</taxon>
        <taxon>Aeropyrum</taxon>
    </lineage>
</organism>
<comment type="function">
    <text evidence="2">DNA glycosylase that excises thymine from T/G mismatches. Also has a weak DNA glycosylase activity on uracil paired with various bases.</text>
</comment>
<comment type="catalytic activity">
    <reaction evidence="2">
        <text>Hydrolyzes mismatched double-stranded DNA and polynucleotides, releasing free thymine.</text>
        <dbReference type="EC" id="3.2.2.29"/>
    </reaction>
</comment>
<comment type="cofactor">
    <cofactor evidence="2">
        <name>[4Fe-4S] cluster</name>
        <dbReference type="ChEBI" id="CHEBI:49883"/>
    </cofactor>
    <text evidence="1">Binds 1 [4Fe-4S] cluster. The cluster has a structural role.</text>
</comment>
<comment type="activity regulation">
    <text evidence="2">Thymine cleavage is completely inhibited by Ni(2+), Co(2+), Zn(2+), Cu(2+) and Mn(2+). Activity is not affected by Mg(2+) and Ca(2+).</text>
</comment>
<comment type="biophysicochemical properties">
    <phDependence>
        <text evidence="2">Optimum pH is 8.5.</text>
    </phDependence>
    <temperatureDependence>
        <text evidence="2">Optimum temperature is 65-70 degrees Celsius.</text>
    </temperatureDependence>
</comment>
<comment type="similarity">
    <text evidence="5">Belongs to the Nth/MutY family.</text>
</comment>
<protein>
    <recommendedName>
        <fullName evidence="4">Thymine-DNA glycosylase</fullName>
        <ecNumber evidence="2">3.2.2.29</ecNumber>
    </recommendedName>
    <alternativeName>
        <fullName evidence="4">ApeTDG</fullName>
    </alternativeName>
    <alternativeName>
        <fullName evidence="3">Type II nicking enzyme V.ApeKIP</fullName>
        <shortName evidence="3">V.ApeKIP</shortName>
    </alternativeName>
</protein>
<feature type="chain" id="PRO_0000449118" description="Thymine-DNA glycosylase">
    <location>
        <begin position="1"/>
        <end position="223"/>
    </location>
</feature>
<feature type="binding site" evidence="1">
    <location>
        <position position="201"/>
    </location>
    <ligand>
        <name>[4Fe-4S] cluster</name>
        <dbReference type="ChEBI" id="CHEBI:49883"/>
    </ligand>
</feature>
<feature type="binding site" evidence="1">
    <location>
        <position position="208"/>
    </location>
    <ligand>
        <name>[4Fe-4S] cluster</name>
        <dbReference type="ChEBI" id="CHEBI:49883"/>
    </ligand>
</feature>
<feature type="binding site" evidence="1">
    <location>
        <position position="211"/>
    </location>
    <ligand>
        <name>[4Fe-4S] cluster</name>
        <dbReference type="ChEBI" id="CHEBI:49883"/>
    </ligand>
</feature>
<feature type="binding site" evidence="1">
    <location>
        <position position="217"/>
    </location>
    <ligand>
        <name>[4Fe-4S] cluster</name>
        <dbReference type="ChEBI" id="CHEBI:49883"/>
    </ligand>
</feature>
<reference key="1">
    <citation type="journal article" date="1999" name="DNA Res.">
        <title>Complete genome sequence of an aerobic hyper-thermophilic crenarchaeon, Aeropyrum pernix K1.</title>
        <authorList>
            <person name="Kawarabayasi Y."/>
            <person name="Hino Y."/>
            <person name="Horikawa H."/>
            <person name="Yamazaki S."/>
            <person name="Haikawa Y."/>
            <person name="Jin-no K."/>
            <person name="Takahashi M."/>
            <person name="Sekine M."/>
            <person name="Baba S."/>
            <person name="Ankai A."/>
            <person name="Kosugi H."/>
            <person name="Hosoyama A."/>
            <person name="Fukui S."/>
            <person name="Nagai Y."/>
            <person name="Nishijima K."/>
            <person name="Nakazawa H."/>
            <person name="Takamiya M."/>
            <person name="Masuda S."/>
            <person name="Funahashi T."/>
            <person name="Tanaka T."/>
            <person name="Kudoh Y."/>
            <person name="Yamazaki J."/>
            <person name="Kushida N."/>
            <person name="Oguchi A."/>
            <person name="Aoki K."/>
            <person name="Kubota K."/>
            <person name="Nakamura Y."/>
            <person name="Nomura N."/>
            <person name="Sako Y."/>
            <person name="Kikuchi H."/>
        </authorList>
    </citation>
    <scope>NUCLEOTIDE SEQUENCE [LARGE SCALE GENOMIC DNA]</scope>
    <source>
        <strain>ATCC 700893 / DSM 11879 / JCM 9820 / NBRC 100138 / K1</strain>
    </source>
</reference>
<reference key="2">
    <citation type="journal article" date="2010" name="Protein Expr. Purif.">
        <title>Expression and characterization of thymine-DNA glycosylase from Aeropyrum pernix.</title>
        <authorList>
            <person name="Liu X.P."/>
            <person name="Li C.P."/>
            <person name="Hou J.L."/>
            <person name="Liu Y.F."/>
            <person name="Liang R.B."/>
            <person name="Liu J.H."/>
        </authorList>
    </citation>
    <scope>FUNCTION</scope>
    <scope>CATALYTIC ACTIVITY</scope>
    <scope>COFACTOR</scope>
    <scope>ACTIVITY REGULATION</scope>
    <scope>BIOPHYSICOCHEMICAL PROPERTIES</scope>
    <source>
        <strain>K5</strain>
    </source>
</reference>
<reference key="3">
    <citation type="journal article" date="2003" name="Nucleic Acids Res.">
        <title>A nomenclature for restriction enzymes, DNA methyltransferases, homing endonucleases and their genes.</title>
        <authorList>
            <person name="Roberts R.J."/>
            <person name="Belfort M."/>
            <person name="Bestor T."/>
            <person name="Bhagwat A.S."/>
            <person name="Bickle T.A."/>
            <person name="Bitinaite J."/>
            <person name="Blumenthal R.M."/>
            <person name="Degtyarev S.K."/>
            <person name="Dryden D.T."/>
            <person name="Dybvig K."/>
            <person name="Firman K."/>
            <person name="Gromova E.S."/>
            <person name="Gumport R.I."/>
            <person name="Halford S.E."/>
            <person name="Hattman S."/>
            <person name="Heitman J."/>
            <person name="Hornby D.P."/>
            <person name="Janulaitis A."/>
            <person name="Jeltsch A."/>
            <person name="Josephsen J."/>
            <person name="Kiss A."/>
            <person name="Klaenhammer T.R."/>
            <person name="Kobayashi I."/>
            <person name="Kong H."/>
            <person name="Krueger D.H."/>
            <person name="Lacks S."/>
            <person name="Marinus M.G."/>
            <person name="Miyahara M."/>
            <person name="Morgan R.D."/>
            <person name="Murray N.E."/>
            <person name="Nagaraja V."/>
            <person name="Piekarowicz A."/>
            <person name="Pingoud A."/>
            <person name="Raleigh E."/>
            <person name="Rao D.N."/>
            <person name="Reich N."/>
            <person name="Repin V.E."/>
            <person name="Selker E.U."/>
            <person name="Shaw P.C."/>
            <person name="Stein D.C."/>
            <person name="Stoddard B.L."/>
            <person name="Szybalski W."/>
            <person name="Trautner T.A."/>
            <person name="Van Etten J.L."/>
            <person name="Vitor J.M."/>
            <person name="Wilson G.G."/>
            <person name="Xu S.Y."/>
        </authorList>
    </citation>
    <scope>NOMENCLATURE</scope>
</reference>
<evidence type="ECO:0000250" key="1">
    <source>
        <dbReference type="UniProtKB" id="P83847"/>
    </source>
</evidence>
<evidence type="ECO:0000269" key="2">
    <source>
    </source>
</evidence>
<evidence type="ECO:0000303" key="3">
    <source>
    </source>
</evidence>
<evidence type="ECO:0000303" key="4">
    <source>
    </source>
</evidence>
<evidence type="ECO:0000305" key="5"/>
<evidence type="ECO:0000312" key="6">
    <source>
        <dbReference type="EMBL" id="BAA79857.2"/>
    </source>
</evidence>
<accession>Q9YDP0</accession>